<organismHost>
    <name type="scientific">Homo sapiens</name>
    <name type="common">Human</name>
    <dbReference type="NCBI Taxonomy" id="9606"/>
</organismHost>
<protein>
    <recommendedName>
        <fullName>Uncharacterized 8.9 kDa protein</fullName>
    </recommendedName>
</protein>
<reference key="1">
    <citation type="journal article" date="1990" name="Virology">
        <title>The complete DNA sequence of vaccinia virus.</title>
        <authorList>
            <person name="Goebel S.J."/>
            <person name="Johnson G.P."/>
            <person name="Perkus M.E."/>
            <person name="Davis S.W."/>
            <person name="Winslow J.P."/>
            <person name="Paoletti E."/>
        </authorList>
    </citation>
    <scope>NUCLEOTIDE SEQUENCE [LARGE SCALE GENOMIC DNA]</scope>
</reference>
<reference key="2">
    <citation type="journal article" date="1990" name="Virology">
        <title>Appendix to 'The complete DNA sequence of vaccinia virus'.</title>
        <authorList>
            <person name="Goebel S.J."/>
            <person name="Johnson G.P."/>
            <person name="Perkus M.E."/>
            <person name="Davis S.W."/>
            <person name="Winslow J.P."/>
            <person name="Paoletti E."/>
        </authorList>
    </citation>
    <scope>COMPLETE GENOME</scope>
</reference>
<sequence>MDIKNLLTACTIFYITTLATADIPTPPPTGHVTRENILIRGIINVVIGVHLENLPRLDVMVTITQNVNAAHLIHIPQSQLF</sequence>
<gene>
    <name type="ORF">A ORF T</name>
</gene>
<name>YVAT_VACCC</name>
<keyword id="KW-1185">Reference proteome</keyword>
<proteinExistence type="predicted"/>
<dbReference type="EMBL" id="M35027">
    <property type="protein sequence ID" value="AAA48189.1"/>
    <property type="molecule type" value="Genomic_DNA"/>
</dbReference>
<dbReference type="PIR" id="G42525">
    <property type="entry name" value="G42525"/>
</dbReference>
<dbReference type="Proteomes" id="UP000008269">
    <property type="component" value="Segment"/>
</dbReference>
<organism>
    <name type="scientific">Vaccinia virus (strain Copenhagen)</name>
    <name type="common">VACV</name>
    <dbReference type="NCBI Taxonomy" id="10249"/>
    <lineage>
        <taxon>Viruses</taxon>
        <taxon>Varidnaviria</taxon>
        <taxon>Bamfordvirae</taxon>
        <taxon>Nucleocytoviricota</taxon>
        <taxon>Pokkesviricetes</taxon>
        <taxon>Chitovirales</taxon>
        <taxon>Poxviridae</taxon>
        <taxon>Chordopoxvirinae</taxon>
        <taxon>Orthopoxvirus</taxon>
        <taxon>Vaccinia virus</taxon>
    </lineage>
</organism>
<accession>P68630</accession>
<accession>P20529</accession>
<feature type="chain" id="PRO_0000099664" description="Uncharacterized 8.9 kDa protein">
    <location>
        <begin position="1"/>
        <end position="81"/>
    </location>
</feature>